<feature type="signal peptide" evidence="3">
    <location>
        <begin position="1"/>
        <end position="17"/>
    </location>
</feature>
<feature type="propeptide" id="PRO_0000028357" evidence="1">
    <location>
        <begin position="18"/>
        <end position="29"/>
    </location>
</feature>
<feature type="propeptide" id="PRO_0000285917" description="Removed by plasmin">
    <location>
        <begin position="30"/>
        <end position="32"/>
    </location>
</feature>
<feature type="chain" id="PRO_0000028358" description="Tissue-type plasminogen activator" evidence="1">
    <location>
        <begin position="33"/>
        <end position="559"/>
    </location>
</feature>
<feature type="chain" id="PRO_0000028359" description="Tissue-type plasminogen activator chain A">
    <location>
        <begin position="33"/>
        <end position="308"/>
    </location>
</feature>
<feature type="chain" id="PRO_0000028360" description="Tissue-type plasminogen activator chain B">
    <location>
        <begin position="309"/>
        <end position="559"/>
    </location>
</feature>
<feature type="domain" description="Fibronectin type-I" evidence="7">
    <location>
        <begin position="36"/>
        <end position="78"/>
    </location>
</feature>
<feature type="domain" description="EGF-like" evidence="4">
    <location>
        <begin position="79"/>
        <end position="117"/>
    </location>
</feature>
<feature type="domain" description="Kringle 1" evidence="5">
    <location>
        <begin position="124"/>
        <end position="205"/>
    </location>
</feature>
<feature type="domain" description="Kringle 2" evidence="5">
    <location>
        <begin position="213"/>
        <end position="294"/>
    </location>
</feature>
<feature type="domain" description="Peptidase S1" evidence="6">
    <location>
        <begin position="309"/>
        <end position="558"/>
    </location>
</feature>
<feature type="region of interest" description="Important for binding to annexin A2" evidence="1">
    <location>
        <begin position="39"/>
        <end position="49"/>
    </location>
</feature>
<feature type="active site" description="Charge relay system">
    <location>
        <position position="355"/>
    </location>
</feature>
<feature type="active site" description="Charge relay system">
    <location>
        <position position="404"/>
    </location>
</feature>
<feature type="active site" description="Charge relay system">
    <location>
        <position position="510"/>
    </location>
</feature>
<feature type="site" description="Important for binding to LRP1" evidence="1">
    <location>
        <position position="99"/>
    </location>
</feature>
<feature type="site" description="Important for single-chain activity" evidence="1">
    <location>
        <position position="462"/>
    </location>
</feature>
<feature type="site" description="Important for single-chain activity" evidence="1">
    <location>
        <position position="509"/>
    </location>
</feature>
<feature type="glycosylation site" description="N-linked (GlcNAc...) asparagine" evidence="3">
    <location>
        <position position="149"/>
    </location>
</feature>
<feature type="glycosylation site" description="N-linked (GlcNAc...) asparagine" evidence="3">
    <location>
        <position position="481"/>
    </location>
</feature>
<feature type="disulfide bond" evidence="1">
    <location>
        <begin position="38"/>
        <end position="68"/>
    </location>
</feature>
<feature type="disulfide bond" evidence="1">
    <location>
        <begin position="66"/>
        <end position="75"/>
    </location>
</feature>
<feature type="disulfide bond" evidence="1">
    <location>
        <begin position="83"/>
        <end position="94"/>
    </location>
</feature>
<feature type="disulfide bond" evidence="1">
    <location>
        <begin position="88"/>
        <end position="105"/>
    </location>
</feature>
<feature type="disulfide bond" evidence="1">
    <location>
        <begin position="107"/>
        <end position="116"/>
    </location>
</feature>
<feature type="disulfide bond" evidence="1">
    <location>
        <begin position="124"/>
        <end position="205"/>
    </location>
</feature>
<feature type="disulfide bond" evidence="1">
    <location>
        <begin position="145"/>
        <end position="187"/>
    </location>
</feature>
<feature type="disulfide bond" evidence="1">
    <location>
        <begin position="176"/>
        <end position="200"/>
    </location>
</feature>
<feature type="disulfide bond" evidence="1">
    <location>
        <begin position="213"/>
        <end position="294"/>
    </location>
</feature>
<feature type="disulfide bond" evidence="1">
    <location>
        <begin position="234"/>
        <end position="276"/>
    </location>
</feature>
<feature type="disulfide bond" evidence="1">
    <location>
        <begin position="265"/>
        <end position="289"/>
    </location>
</feature>
<feature type="disulfide bond" description="Interchain (between A and B chains)" evidence="4 5 6 7">
    <location>
        <begin position="297"/>
        <end position="428"/>
    </location>
</feature>
<feature type="disulfide bond" evidence="1">
    <location>
        <begin position="340"/>
        <end position="356"/>
    </location>
</feature>
<feature type="disulfide bond" evidence="1">
    <location>
        <begin position="348"/>
        <end position="417"/>
    </location>
</feature>
<feature type="disulfide bond" evidence="1">
    <location>
        <begin position="442"/>
        <end position="516"/>
    </location>
</feature>
<feature type="disulfide bond" evidence="1">
    <location>
        <begin position="474"/>
        <end position="490"/>
    </location>
</feature>
<feature type="disulfide bond" evidence="1">
    <location>
        <begin position="506"/>
        <end position="534"/>
    </location>
</feature>
<feature type="sequence conflict" description="In Ref. 1; AAA41812." evidence="9" ref="1">
    <original>E</original>
    <variation>K</variation>
    <location>
        <position position="380"/>
    </location>
</feature>
<organism>
    <name type="scientific">Rattus norvegicus</name>
    <name type="common">Rat</name>
    <dbReference type="NCBI Taxonomy" id="10116"/>
    <lineage>
        <taxon>Eukaryota</taxon>
        <taxon>Metazoa</taxon>
        <taxon>Chordata</taxon>
        <taxon>Craniata</taxon>
        <taxon>Vertebrata</taxon>
        <taxon>Euteleostomi</taxon>
        <taxon>Mammalia</taxon>
        <taxon>Eutheria</taxon>
        <taxon>Euarchontoglires</taxon>
        <taxon>Glires</taxon>
        <taxon>Rodentia</taxon>
        <taxon>Myomorpha</taxon>
        <taxon>Muroidea</taxon>
        <taxon>Muridae</taxon>
        <taxon>Murinae</taxon>
        <taxon>Rattus</taxon>
    </lineage>
</organism>
<dbReference type="EC" id="3.4.21.68"/>
<dbReference type="EMBL" id="M23697">
    <property type="protein sequence ID" value="AAA41812.1"/>
    <property type="molecule type" value="mRNA"/>
</dbReference>
<dbReference type="EMBL" id="M31197">
    <property type="protein sequence ID" value="AAA42261.1"/>
    <property type="molecule type" value="Genomic_DNA"/>
</dbReference>
<dbReference type="EMBL" id="M31185">
    <property type="protein sequence ID" value="AAA42261.1"/>
    <property type="status" value="JOINED"/>
    <property type="molecule type" value="Genomic_DNA"/>
</dbReference>
<dbReference type="EMBL" id="M31186">
    <property type="protein sequence ID" value="AAA42261.1"/>
    <property type="status" value="JOINED"/>
    <property type="molecule type" value="Genomic_DNA"/>
</dbReference>
<dbReference type="EMBL" id="M31187">
    <property type="protein sequence ID" value="AAA42261.1"/>
    <property type="status" value="JOINED"/>
    <property type="molecule type" value="Genomic_DNA"/>
</dbReference>
<dbReference type="EMBL" id="M31188">
    <property type="protein sequence ID" value="AAA42261.1"/>
    <property type="status" value="JOINED"/>
    <property type="molecule type" value="Genomic_DNA"/>
</dbReference>
<dbReference type="EMBL" id="M31189">
    <property type="protein sequence ID" value="AAA42261.1"/>
    <property type="status" value="JOINED"/>
    <property type="molecule type" value="Genomic_DNA"/>
</dbReference>
<dbReference type="EMBL" id="M31190">
    <property type="protein sequence ID" value="AAA42261.1"/>
    <property type="status" value="JOINED"/>
    <property type="molecule type" value="Genomic_DNA"/>
</dbReference>
<dbReference type="EMBL" id="M31191">
    <property type="protein sequence ID" value="AAA42261.1"/>
    <property type="status" value="JOINED"/>
    <property type="molecule type" value="Genomic_DNA"/>
</dbReference>
<dbReference type="EMBL" id="M31192">
    <property type="protein sequence ID" value="AAA42261.1"/>
    <property type="status" value="JOINED"/>
    <property type="molecule type" value="Genomic_DNA"/>
</dbReference>
<dbReference type="EMBL" id="M31193">
    <property type="protein sequence ID" value="AAA42261.1"/>
    <property type="status" value="JOINED"/>
    <property type="molecule type" value="Genomic_DNA"/>
</dbReference>
<dbReference type="EMBL" id="M31194">
    <property type="protein sequence ID" value="AAA42261.1"/>
    <property type="status" value="JOINED"/>
    <property type="molecule type" value="Genomic_DNA"/>
</dbReference>
<dbReference type="EMBL" id="M31195">
    <property type="protein sequence ID" value="AAA42261.1"/>
    <property type="status" value="JOINED"/>
    <property type="molecule type" value="Genomic_DNA"/>
</dbReference>
<dbReference type="EMBL" id="M31196">
    <property type="protein sequence ID" value="AAA42261.1"/>
    <property type="status" value="JOINED"/>
    <property type="molecule type" value="Genomic_DNA"/>
</dbReference>
<dbReference type="EMBL" id="BC061565">
    <property type="protein sequence ID" value="AAH61565.1"/>
    <property type="molecule type" value="mRNA"/>
</dbReference>
<dbReference type="PIR" id="A35029">
    <property type="entry name" value="A35029"/>
</dbReference>
<dbReference type="RefSeq" id="NP_037283.2">
    <property type="nucleotide sequence ID" value="NM_013151.2"/>
</dbReference>
<dbReference type="RefSeq" id="XP_008769570.1">
    <property type="nucleotide sequence ID" value="XM_008771348.1"/>
</dbReference>
<dbReference type="RefSeq" id="XP_063131168.1">
    <property type="nucleotide sequence ID" value="XM_063275098.1"/>
</dbReference>
<dbReference type="SMR" id="P19637"/>
<dbReference type="FunCoup" id="P19637">
    <property type="interactions" value="655"/>
</dbReference>
<dbReference type="IntAct" id="P19637">
    <property type="interactions" value="1"/>
</dbReference>
<dbReference type="MINT" id="P19637"/>
<dbReference type="STRING" id="10116.ENSRNOP00000025764"/>
<dbReference type="MEROPS" id="S01.232"/>
<dbReference type="GlyCosmos" id="P19637">
    <property type="glycosylation" value="2 sites, No reported glycans"/>
</dbReference>
<dbReference type="GlyGen" id="P19637">
    <property type="glycosylation" value="2 sites"/>
</dbReference>
<dbReference type="PhosphoSitePlus" id="P19637"/>
<dbReference type="jPOST" id="P19637"/>
<dbReference type="PaxDb" id="10116-ENSRNOP00000025764"/>
<dbReference type="GeneID" id="25692"/>
<dbReference type="KEGG" id="rno:25692"/>
<dbReference type="UCSC" id="RGD:3342">
    <property type="organism name" value="rat"/>
</dbReference>
<dbReference type="AGR" id="RGD:3342"/>
<dbReference type="CTD" id="5327"/>
<dbReference type="RGD" id="3342">
    <property type="gene designation" value="Plat"/>
</dbReference>
<dbReference type="VEuPathDB" id="HostDB:ENSRNOG00000019018"/>
<dbReference type="eggNOG" id="KOG3627">
    <property type="taxonomic scope" value="Eukaryota"/>
</dbReference>
<dbReference type="HOGENOM" id="CLU_006842_18_4_1"/>
<dbReference type="InParanoid" id="P19637"/>
<dbReference type="OrthoDB" id="6020543at2759"/>
<dbReference type="PhylomeDB" id="P19637"/>
<dbReference type="TreeFam" id="TF329901"/>
<dbReference type="BRENDA" id="3.4.21.68">
    <property type="organism ID" value="5301"/>
</dbReference>
<dbReference type="Reactome" id="R-RNO-186797">
    <property type="pathway name" value="Signaling by PDGF"/>
</dbReference>
<dbReference type="Reactome" id="R-RNO-75205">
    <property type="pathway name" value="Dissolution of Fibrin Clot"/>
</dbReference>
<dbReference type="PRO" id="PR:P19637"/>
<dbReference type="Proteomes" id="UP000002494">
    <property type="component" value="Chromosome 16"/>
</dbReference>
<dbReference type="Bgee" id="ENSRNOG00000019018">
    <property type="expression patterns" value="Expressed in ovary and 20 other cell types or tissues"/>
</dbReference>
<dbReference type="GO" id="GO:0045177">
    <property type="term" value="C:apical part of cell"/>
    <property type="evidence" value="ECO:0000266"/>
    <property type="project" value="RGD"/>
</dbReference>
<dbReference type="GO" id="GO:0009986">
    <property type="term" value="C:cell surface"/>
    <property type="evidence" value="ECO:0000266"/>
    <property type="project" value="RGD"/>
</dbReference>
<dbReference type="GO" id="GO:0005737">
    <property type="term" value="C:cytoplasm"/>
    <property type="evidence" value="ECO:0000266"/>
    <property type="project" value="RGD"/>
</dbReference>
<dbReference type="GO" id="GO:0005615">
    <property type="term" value="C:extracellular space"/>
    <property type="evidence" value="ECO:0000314"/>
    <property type="project" value="RGD"/>
</dbReference>
<dbReference type="GO" id="GO:0098978">
    <property type="term" value="C:glutamatergic synapse"/>
    <property type="evidence" value="ECO:0000314"/>
    <property type="project" value="SynGO"/>
</dbReference>
<dbReference type="GO" id="GO:0098992">
    <property type="term" value="C:neuronal dense core vesicle"/>
    <property type="evidence" value="ECO:0000314"/>
    <property type="project" value="SynGO"/>
</dbReference>
<dbReference type="GO" id="GO:0099544">
    <property type="term" value="C:perisynaptic space"/>
    <property type="evidence" value="ECO:0000314"/>
    <property type="project" value="SynGO"/>
</dbReference>
<dbReference type="GO" id="GO:0098794">
    <property type="term" value="C:postsynapse"/>
    <property type="evidence" value="ECO:0000314"/>
    <property type="project" value="SynGO"/>
</dbReference>
<dbReference type="GO" id="GO:0098685">
    <property type="term" value="C:Schaffer collateral - CA1 synapse"/>
    <property type="evidence" value="ECO:0000266"/>
    <property type="project" value="RGD"/>
</dbReference>
<dbReference type="GO" id="GO:0030141">
    <property type="term" value="C:secretory granule"/>
    <property type="evidence" value="ECO:0000266"/>
    <property type="project" value="RGD"/>
</dbReference>
<dbReference type="GO" id="GO:0097180">
    <property type="term" value="C:serine protease inhibitor complex"/>
    <property type="evidence" value="ECO:0000266"/>
    <property type="project" value="RGD"/>
</dbReference>
<dbReference type="GO" id="GO:0051219">
    <property type="term" value="F:phosphoprotein binding"/>
    <property type="evidence" value="ECO:0000266"/>
    <property type="project" value="RGD"/>
</dbReference>
<dbReference type="GO" id="GO:0004252">
    <property type="term" value="F:serine-type endopeptidase activity"/>
    <property type="evidence" value="ECO:0000266"/>
    <property type="project" value="RGD"/>
</dbReference>
<dbReference type="GO" id="GO:0005102">
    <property type="term" value="F:signaling receptor binding"/>
    <property type="evidence" value="ECO:0000266"/>
    <property type="project" value="RGD"/>
</dbReference>
<dbReference type="GO" id="GO:0071549">
    <property type="term" value="P:cellular response to dexamethasone stimulus"/>
    <property type="evidence" value="ECO:0000270"/>
    <property type="project" value="RGD"/>
</dbReference>
<dbReference type="GO" id="GO:0071372">
    <property type="term" value="P:cellular response to follicle-stimulating hormone stimulus"/>
    <property type="evidence" value="ECO:0000270"/>
    <property type="project" value="RGD"/>
</dbReference>
<dbReference type="GO" id="GO:0071373">
    <property type="term" value="P:cellular response to luteinizing hormone stimulus"/>
    <property type="evidence" value="ECO:0000270"/>
    <property type="project" value="RGD"/>
</dbReference>
<dbReference type="GO" id="GO:0045861">
    <property type="term" value="P:negative regulation of proteolysis"/>
    <property type="evidence" value="ECO:0000266"/>
    <property type="project" value="RGD"/>
</dbReference>
<dbReference type="GO" id="GO:0031639">
    <property type="term" value="P:plasminogen activation"/>
    <property type="evidence" value="ECO:0000314"/>
    <property type="project" value="RGD"/>
</dbReference>
<dbReference type="GO" id="GO:0048008">
    <property type="term" value="P:platelet-derived growth factor receptor signaling pathway"/>
    <property type="evidence" value="ECO:0000266"/>
    <property type="project" value="RGD"/>
</dbReference>
<dbReference type="GO" id="GO:0060468">
    <property type="term" value="P:prevention of polyspermy"/>
    <property type="evidence" value="ECO:0000314"/>
    <property type="project" value="UniProtKB"/>
</dbReference>
<dbReference type="GO" id="GO:0006508">
    <property type="term" value="P:proteolysis"/>
    <property type="evidence" value="ECO:0000266"/>
    <property type="project" value="RGD"/>
</dbReference>
<dbReference type="GO" id="GO:0048167">
    <property type="term" value="P:regulation of synaptic plasticity"/>
    <property type="evidence" value="ECO:0000270"/>
    <property type="project" value="RGD"/>
</dbReference>
<dbReference type="GO" id="GO:0051591">
    <property type="term" value="P:response to cAMP"/>
    <property type="evidence" value="ECO:0000270"/>
    <property type="project" value="RGD"/>
</dbReference>
<dbReference type="GO" id="GO:0070542">
    <property type="term" value="P:response to fatty acid"/>
    <property type="evidence" value="ECO:0000270"/>
    <property type="project" value="RGD"/>
</dbReference>
<dbReference type="GO" id="GO:0001666">
    <property type="term" value="P:response to hypoxia"/>
    <property type="evidence" value="ECO:0000266"/>
    <property type="project" value="RGD"/>
</dbReference>
<dbReference type="GO" id="GO:0014909">
    <property type="term" value="P:smooth muscle cell migration"/>
    <property type="evidence" value="ECO:0000266"/>
    <property type="project" value="RGD"/>
</dbReference>
<dbReference type="GO" id="GO:0035249">
    <property type="term" value="P:synaptic transmission, glutamatergic"/>
    <property type="evidence" value="ECO:0000315"/>
    <property type="project" value="RGD"/>
</dbReference>
<dbReference type="GO" id="GO:0099183">
    <property type="term" value="P:trans-synaptic signaling by BDNF, modulating synaptic transmission"/>
    <property type="evidence" value="ECO:0000266"/>
    <property type="project" value="RGD"/>
</dbReference>
<dbReference type="CDD" id="cd00054">
    <property type="entry name" value="EGF_CA"/>
    <property type="match status" value="1"/>
</dbReference>
<dbReference type="CDD" id="cd00108">
    <property type="entry name" value="KR"/>
    <property type="match status" value="2"/>
</dbReference>
<dbReference type="CDD" id="cd00190">
    <property type="entry name" value="Tryp_SPc"/>
    <property type="match status" value="1"/>
</dbReference>
<dbReference type="FunFam" id="2.10.70.10:FF:000043">
    <property type="entry name" value="Plasminogen activator"/>
    <property type="match status" value="1"/>
</dbReference>
<dbReference type="FunFam" id="2.10.25.10:FF:000483">
    <property type="entry name" value="Tissue-type plasminogen activator"/>
    <property type="match status" value="1"/>
</dbReference>
<dbReference type="FunFam" id="2.40.10.10:FF:000003">
    <property type="entry name" value="Transmembrane serine protease 3"/>
    <property type="match status" value="1"/>
</dbReference>
<dbReference type="FunFam" id="2.40.20.10:FF:000001">
    <property type="entry name" value="Urokinase-type plasminogen activator"/>
    <property type="match status" value="2"/>
</dbReference>
<dbReference type="Gene3D" id="2.10.70.10">
    <property type="entry name" value="Complement Module, domain 1"/>
    <property type="match status" value="1"/>
</dbReference>
<dbReference type="Gene3D" id="2.10.25.10">
    <property type="entry name" value="Laminin"/>
    <property type="match status" value="1"/>
</dbReference>
<dbReference type="Gene3D" id="2.40.20.10">
    <property type="entry name" value="Plasminogen Kringle 4"/>
    <property type="match status" value="2"/>
</dbReference>
<dbReference type="Gene3D" id="2.40.10.10">
    <property type="entry name" value="Trypsin-like serine proteases"/>
    <property type="match status" value="2"/>
</dbReference>
<dbReference type="InterPro" id="IPR000742">
    <property type="entry name" value="EGF-like_dom"/>
</dbReference>
<dbReference type="InterPro" id="IPR000083">
    <property type="entry name" value="Fibronectin_type1"/>
</dbReference>
<dbReference type="InterPro" id="IPR000001">
    <property type="entry name" value="Kringle"/>
</dbReference>
<dbReference type="InterPro" id="IPR013806">
    <property type="entry name" value="Kringle-like"/>
</dbReference>
<dbReference type="InterPro" id="IPR018056">
    <property type="entry name" value="Kringle_CS"/>
</dbReference>
<dbReference type="InterPro" id="IPR038178">
    <property type="entry name" value="Kringle_sf"/>
</dbReference>
<dbReference type="InterPro" id="IPR009003">
    <property type="entry name" value="Peptidase_S1_PA"/>
</dbReference>
<dbReference type="InterPro" id="IPR043504">
    <property type="entry name" value="Peptidase_S1_PA_chymotrypsin"/>
</dbReference>
<dbReference type="InterPro" id="IPR001314">
    <property type="entry name" value="Peptidase_S1A"/>
</dbReference>
<dbReference type="InterPro" id="IPR050127">
    <property type="entry name" value="Serine_Proteases_S1"/>
</dbReference>
<dbReference type="InterPro" id="IPR026280">
    <property type="entry name" value="Tissue_plasm_act"/>
</dbReference>
<dbReference type="InterPro" id="IPR001254">
    <property type="entry name" value="Trypsin_dom"/>
</dbReference>
<dbReference type="InterPro" id="IPR018114">
    <property type="entry name" value="TRYPSIN_HIS"/>
</dbReference>
<dbReference type="InterPro" id="IPR033116">
    <property type="entry name" value="TRYPSIN_SER"/>
</dbReference>
<dbReference type="PANTHER" id="PTHR24264:SF42">
    <property type="entry name" value="TISSUE-TYPE PLASMINOGEN ACTIVATOR"/>
    <property type="match status" value="1"/>
</dbReference>
<dbReference type="PANTHER" id="PTHR24264">
    <property type="entry name" value="TRYPSIN-RELATED"/>
    <property type="match status" value="1"/>
</dbReference>
<dbReference type="Pfam" id="PF00008">
    <property type="entry name" value="EGF"/>
    <property type="match status" value="1"/>
</dbReference>
<dbReference type="Pfam" id="PF00039">
    <property type="entry name" value="fn1"/>
    <property type="match status" value="1"/>
</dbReference>
<dbReference type="Pfam" id="PF00051">
    <property type="entry name" value="Kringle"/>
    <property type="match status" value="2"/>
</dbReference>
<dbReference type="Pfam" id="PF00089">
    <property type="entry name" value="Trypsin"/>
    <property type="match status" value="1"/>
</dbReference>
<dbReference type="PIRSF" id="PIRSF001145">
    <property type="entry name" value="Tissue_plasm_act"/>
    <property type="match status" value="1"/>
</dbReference>
<dbReference type="PRINTS" id="PR00722">
    <property type="entry name" value="CHYMOTRYPSIN"/>
</dbReference>
<dbReference type="PRINTS" id="PR00018">
    <property type="entry name" value="KRINGLE"/>
</dbReference>
<dbReference type="SMART" id="SM00181">
    <property type="entry name" value="EGF"/>
    <property type="match status" value="1"/>
</dbReference>
<dbReference type="SMART" id="SM00058">
    <property type="entry name" value="FN1"/>
    <property type="match status" value="1"/>
</dbReference>
<dbReference type="SMART" id="SM00130">
    <property type="entry name" value="KR"/>
    <property type="match status" value="2"/>
</dbReference>
<dbReference type="SMART" id="SM00020">
    <property type="entry name" value="Tryp_SPc"/>
    <property type="match status" value="1"/>
</dbReference>
<dbReference type="SUPFAM" id="SSF57603">
    <property type="entry name" value="FnI-like domain"/>
    <property type="match status" value="1"/>
</dbReference>
<dbReference type="SUPFAM" id="SSF57440">
    <property type="entry name" value="Kringle-like"/>
    <property type="match status" value="2"/>
</dbReference>
<dbReference type="SUPFAM" id="SSF50494">
    <property type="entry name" value="Trypsin-like serine proteases"/>
    <property type="match status" value="1"/>
</dbReference>
<dbReference type="PROSITE" id="PS00022">
    <property type="entry name" value="EGF_1"/>
    <property type="match status" value="1"/>
</dbReference>
<dbReference type="PROSITE" id="PS01186">
    <property type="entry name" value="EGF_2"/>
    <property type="match status" value="1"/>
</dbReference>
<dbReference type="PROSITE" id="PS50026">
    <property type="entry name" value="EGF_3"/>
    <property type="match status" value="1"/>
</dbReference>
<dbReference type="PROSITE" id="PS01253">
    <property type="entry name" value="FN1_1"/>
    <property type="match status" value="1"/>
</dbReference>
<dbReference type="PROSITE" id="PS51091">
    <property type="entry name" value="FN1_2"/>
    <property type="match status" value="1"/>
</dbReference>
<dbReference type="PROSITE" id="PS00021">
    <property type="entry name" value="KRINGLE_1"/>
    <property type="match status" value="2"/>
</dbReference>
<dbReference type="PROSITE" id="PS50070">
    <property type="entry name" value="KRINGLE_2"/>
    <property type="match status" value="2"/>
</dbReference>
<dbReference type="PROSITE" id="PS50240">
    <property type="entry name" value="TRYPSIN_DOM"/>
    <property type="match status" value="1"/>
</dbReference>
<dbReference type="PROSITE" id="PS00134">
    <property type="entry name" value="TRYPSIN_HIS"/>
    <property type="match status" value="1"/>
</dbReference>
<dbReference type="PROSITE" id="PS00135">
    <property type="entry name" value="TRYPSIN_SER"/>
    <property type="match status" value="1"/>
</dbReference>
<protein>
    <recommendedName>
        <fullName>Tissue-type plasminogen activator</fullName>
        <shortName>t-PA</shortName>
        <shortName>t-plasminogen activator</shortName>
        <shortName>tPA</shortName>
        <ecNumber>3.4.21.68</ecNumber>
    </recommendedName>
    <component>
        <recommendedName>
            <fullName>Tissue-type plasminogen activator chain A</fullName>
        </recommendedName>
    </component>
    <component>
        <recommendedName>
            <fullName>Tissue-type plasminogen activator chain B</fullName>
        </recommendedName>
    </component>
</protein>
<keyword id="KW-0165">Cleavage on pair of basic residues</keyword>
<keyword id="KW-1015">Disulfide bond</keyword>
<keyword id="KW-0245">EGF-like domain</keyword>
<keyword id="KW-0325">Glycoprotein</keyword>
<keyword id="KW-0378">Hydrolase</keyword>
<keyword id="KW-0420">Kringle</keyword>
<keyword id="KW-0617">Plasminogen activation</keyword>
<keyword id="KW-0645">Protease</keyword>
<keyword id="KW-1185">Reference proteome</keyword>
<keyword id="KW-0677">Repeat</keyword>
<keyword id="KW-0964">Secreted</keyword>
<keyword id="KW-0720">Serine protease</keyword>
<keyword id="KW-0732">Signal</keyword>
<keyword id="KW-0865">Zymogen</keyword>
<accession>P19637</accession>
<evidence type="ECO:0000250" key="1"/>
<evidence type="ECO:0000250" key="2">
    <source>
        <dbReference type="UniProtKB" id="P00750"/>
    </source>
</evidence>
<evidence type="ECO:0000255" key="3"/>
<evidence type="ECO:0000255" key="4">
    <source>
        <dbReference type="PROSITE-ProRule" id="PRU00076"/>
    </source>
</evidence>
<evidence type="ECO:0000255" key="5">
    <source>
        <dbReference type="PROSITE-ProRule" id="PRU00121"/>
    </source>
</evidence>
<evidence type="ECO:0000255" key="6">
    <source>
        <dbReference type="PROSITE-ProRule" id="PRU00274"/>
    </source>
</evidence>
<evidence type="ECO:0000255" key="7">
    <source>
        <dbReference type="PROSITE-ProRule" id="PRU00478"/>
    </source>
</evidence>
<evidence type="ECO:0000269" key="8">
    <source>
    </source>
</evidence>
<evidence type="ECO:0000305" key="9"/>
<reference key="1">
    <citation type="journal article" date="1988" name="DNA">
        <title>Cloning and characterization of a cDNA for rat tissue-type plasminogen activator.</title>
        <authorList>
            <person name="Ny T."/>
            <person name="Leonardsson G."/>
            <person name="Hsueh A.J.W."/>
        </authorList>
    </citation>
    <scope>NUCLEOTIDE SEQUENCE [MRNA]</scope>
</reference>
<reference key="2">
    <citation type="journal article" date="1990" name="J. Biol. Chem.">
        <title>The structure of the TATA-less rat tissue-type plasminogen activator gene. Species-specific sequence divergences in the promoter predict differences in regulation of gene expression.</title>
        <authorList>
            <person name="Feng P."/>
            <person name="Ohlsson M."/>
            <person name="Ny T."/>
        </authorList>
    </citation>
    <scope>NUCLEOTIDE SEQUENCE [GENOMIC DNA]</scope>
</reference>
<reference key="3">
    <citation type="journal article" date="2004" name="Genome Res.">
        <title>The status, quality, and expansion of the NIH full-length cDNA project: the Mammalian Gene Collection (MGC).</title>
        <authorList>
            <consortium name="The MGC Project Team"/>
        </authorList>
    </citation>
    <scope>NUCLEOTIDE SEQUENCE [LARGE SCALE MRNA]</scope>
    <source>
        <tissue>Pituitary</tissue>
    </source>
</reference>
<reference key="4">
    <citation type="journal article" date="1992" name="Mol. Reprod. Dev.">
        <title>Release of tissue-type plasminogen activator by activated rat eggs and its possible role in the zona reaction.</title>
        <authorList>
            <person name="Zhang X."/>
            <person name="Rutledge J."/>
            <person name="Khamsi F."/>
            <person name="Armstrong D.T."/>
        </authorList>
    </citation>
    <scope>FUNCTION</scope>
</reference>
<name>TPA_RAT</name>
<sequence>MKGELLCVLLLCGVAFTLPDQGIHRRFRRGARSYRATCRDEQTQTTYQQHQSWLRPMLRGNRVEYCRCNSGLAQCHSVPVRSCSEPRCFNGGTCQQALYFSDFVCQCPDGFVGKRCDIDTRATCFEGQGITYRGTWSTAENGAECINWNSSALSQKPYSARRPNAIKLGLGNHNYCRNPDRDVKPWCYVFKAGKYTTEFCSTPACPKGPTEDCYVGKGVTYRGTHSFTTSKASCLPWNSMILIGKTYTAWRANSQALGLGRHNYCRNPDGDAKPWCHVMKDRKLTWEYCDMSPCSTCGLRQYKQPQFRIKGGLFTDITSHPWQAAIFVKNKRSPGERFLCGGVLISSCWVLSAAHCFVERFPPHHLKVVLGRTYRVVPGEEEQTFEIEKYIVHKEFDDDTYDNDIALLQLRSDSSQCAQESSSVGTACLPDPDVQLPDWTECELSGYGKHEASSPFFSDRLKEAHVRLYPSSRCTSQHLFNKTITSNMLCAGDTRTGGNQDVHDACQGDSGGPLVCMIDKRMTLLGIISWGLGCGQKDVPGIYTKVTNYLNWIQDNMKQ</sequence>
<proteinExistence type="evidence at transcript level"/>
<comment type="function">
    <text evidence="8">Converts the abundant, but inactive, zymogen plasminogen to plasmin by hydrolyzing a single Arg-Val bond in plasminogen. By controlling plasmin-mediated proteolysis, it plays an important role in tissue remodeling and degradation, in cell migration and many other physiopathological events. During oocyte activation, plays a role in cortical granule reaction in the zona reaction, which contributes to the block to polyspermy (PubMed:1515147).</text>
</comment>
<comment type="catalytic activity">
    <reaction>
        <text>Specific cleavage of Arg-|-Val bond in plasminogen to form plasmin.</text>
        <dbReference type="EC" id="3.4.21.68"/>
    </reaction>
</comment>
<comment type="activity regulation">
    <text evidence="2">Inhibited by SERPINA5 (By similarity). Inhibited by SERPINE1 (By similarity).</text>
</comment>
<comment type="subunit">
    <text evidence="1 2">Heterodimer of chain A and chain B held by a disulfide bond. Binds to fibrin with high affinity. This interaction leads to an increase in the catalytic efficiency of the enzyme due to an increase in affinity for plasminogen. Similarly, binding to heparin increases the activation of plasminogen. Binds to annexin A2, cytokeratin-8, fibronectin and laminin. Binds to mannose receptor and the low-density lipoprotein receptor-related protein (LRP1); these proteins are involved in TPA clearance. Binds LRP1B; binding is followed by internalization and degradation. Forms heterodimer with SERPINA5 (By similarity). Interacts with SERPINE1 (By similarity). In complex with SERPINE1, interacts with SORL1 (By similarity).</text>
</comment>
<comment type="subcellular location">
    <subcellularLocation>
        <location>Secreted</location>
        <location>Extracellular space</location>
    </subcellularLocation>
</comment>
<comment type="domain">
    <text evidence="1">Both FN1 and one of the kringle domains are required for binding to fibrin.</text>
</comment>
<comment type="domain">
    <text evidence="1">Both FN1 and EGF-like domains are important for binding to LRP1.</text>
</comment>
<comment type="domain">
    <text evidence="1">The FN1 domain mediates binding to annexin A2.</text>
</comment>
<comment type="domain">
    <text evidence="1">The second kringle domain is implicated in binding to cytokeratin-8 and to the endothelial cell surface binding site.</text>
</comment>
<comment type="PTM">
    <text>The single chain, almost fully active enzyme, can be further processed into a two-chain fully active form by a cleavage after Arg-308 catalyzed by plasmin, tissue kallikrein or factor Xa.</text>
</comment>
<comment type="similarity">
    <text evidence="6">Belongs to the peptidase S1 family.</text>
</comment>
<gene>
    <name type="primary">Plat</name>
</gene>